<dbReference type="EMBL" id="AB033087">
    <property type="protein sequence ID" value="BAA86575.1"/>
    <property type="status" value="ALT_INIT"/>
    <property type="molecule type" value="mRNA"/>
</dbReference>
<dbReference type="EMBL" id="AK296342">
    <property type="protein sequence ID" value="BAG59027.1"/>
    <property type="molecule type" value="mRNA"/>
</dbReference>
<dbReference type="EMBL" id="AL353813">
    <property type="status" value="NOT_ANNOTATED_CDS"/>
    <property type="molecule type" value="Genomic_DNA"/>
</dbReference>
<dbReference type="EMBL" id="AL358975">
    <property type="status" value="NOT_ANNOTATED_CDS"/>
    <property type="molecule type" value="Genomic_DNA"/>
</dbReference>
<dbReference type="EMBL" id="AL445252">
    <property type="status" value="NOT_ANNOTATED_CDS"/>
    <property type="molecule type" value="Genomic_DNA"/>
</dbReference>
<dbReference type="EMBL" id="BC045650">
    <property type="protein sequence ID" value="AAH45650.1"/>
    <property type="molecule type" value="mRNA"/>
</dbReference>
<dbReference type="EMBL" id="BC059405">
    <property type="protein sequence ID" value="AAH59405.2"/>
    <property type="molecule type" value="mRNA"/>
</dbReference>
<dbReference type="EMBL" id="AL162059">
    <property type="protein sequence ID" value="CAB82397.1"/>
    <property type="molecule type" value="mRNA"/>
</dbReference>
<dbReference type="EMBL" id="M99439">
    <property type="protein sequence ID" value="AAA61195.1"/>
    <property type="molecule type" value="mRNA"/>
</dbReference>
<dbReference type="CCDS" id="CCDS43837.1">
    <molecule id="Q04727-1"/>
</dbReference>
<dbReference type="CCDS" id="CCDS65069.1">
    <molecule id="Q04727-3"/>
</dbReference>
<dbReference type="CCDS" id="CCDS65070.1">
    <molecule id="Q04727-4"/>
</dbReference>
<dbReference type="CCDS" id="CCDS75851.1">
    <molecule id="Q04727-2"/>
</dbReference>
<dbReference type="PIR" id="T47149">
    <property type="entry name" value="T47149"/>
</dbReference>
<dbReference type="RefSeq" id="NP_001269677.1">
    <molecule id="Q04727-3"/>
    <property type="nucleotide sequence ID" value="NM_001282748.2"/>
</dbReference>
<dbReference type="RefSeq" id="NP_001269678.1">
    <molecule id="Q04727-4"/>
    <property type="nucleotide sequence ID" value="NM_001282749.2"/>
</dbReference>
<dbReference type="RefSeq" id="NP_001269682.1">
    <molecule id="Q04727-2"/>
    <property type="nucleotide sequence ID" value="NM_001282753.2"/>
</dbReference>
<dbReference type="RefSeq" id="NP_008936.2">
    <molecule id="Q04727-1"/>
    <property type="nucleotide sequence ID" value="NM_007005.4"/>
</dbReference>
<dbReference type="SMR" id="Q04727"/>
<dbReference type="BioGRID" id="112946">
    <property type="interactions" value="86"/>
</dbReference>
<dbReference type="CORUM" id="Q04727"/>
<dbReference type="FunCoup" id="Q04727">
    <property type="interactions" value="2428"/>
</dbReference>
<dbReference type="IntAct" id="Q04727">
    <property type="interactions" value="51"/>
</dbReference>
<dbReference type="MINT" id="Q04727"/>
<dbReference type="STRING" id="9606.ENSP00000365720"/>
<dbReference type="GlyCosmos" id="Q04727">
    <property type="glycosylation" value="6 sites, 2 glycans"/>
</dbReference>
<dbReference type="GlyGen" id="Q04727">
    <property type="glycosylation" value="15 sites, 2 O-linked glycans (13 sites)"/>
</dbReference>
<dbReference type="iPTMnet" id="Q04727"/>
<dbReference type="PhosphoSitePlus" id="Q04727"/>
<dbReference type="BioMuta" id="TLE4"/>
<dbReference type="DMDM" id="158518541"/>
<dbReference type="jPOST" id="Q04727"/>
<dbReference type="MassIVE" id="Q04727"/>
<dbReference type="PaxDb" id="9606-ENSP00000365720"/>
<dbReference type="PeptideAtlas" id="Q04727"/>
<dbReference type="ProteomicsDB" id="29836"/>
<dbReference type="ProteomicsDB" id="58272">
    <molecule id="Q04727-1"/>
</dbReference>
<dbReference type="ProteomicsDB" id="58273">
    <molecule id="Q04727-2"/>
</dbReference>
<dbReference type="ProteomicsDB" id="58274">
    <molecule id="Q04727-3"/>
</dbReference>
<dbReference type="Pumba" id="Q04727"/>
<dbReference type="Antibodypedia" id="27418">
    <property type="antibodies" value="272 antibodies from 29 providers"/>
</dbReference>
<dbReference type="DNASU" id="7091"/>
<dbReference type="Ensembl" id="ENST00000265284.10">
    <molecule id="Q04727-4"/>
    <property type="protein sequence ID" value="ENSP00000265284.6"/>
    <property type="gene ID" value="ENSG00000106829.21"/>
</dbReference>
<dbReference type="Ensembl" id="ENST00000376537.8">
    <molecule id="Q04727-3"/>
    <property type="protein sequence ID" value="ENSP00000365720.4"/>
    <property type="gene ID" value="ENSG00000106829.21"/>
</dbReference>
<dbReference type="Ensembl" id="ENST00000376544.7">
    <molecule id="Q04727-2"/>
    <property type="protein sequence ID" value="ENSP00000365727.4"/>
    <property type="gene ID" value="ENSG00000106829.21"/>
</dbReference>
<dbReference type="Ensembl" id="ENST00000376552.8">
    <molecule id="Q04727-1"/>
    <property type="protein sequence ID" value="ENSP00000365735.2"/>
    <property type="gene ID" value="ENSG00000106829.21"/>
</dbReference>
<dbReference type="GeneID" id="7091"/>
<dbReference type="KEGG" id="hsa:7091"/>
<dbReference type="MANE-Select" id="ENST00000376552.8">
    <property type="protein sequence ID" value="ENSP00000365735.2"/>
    <property type="RefSeq nucleotide sequence ID" value="NM_007005.6"/>
    <property type="RefSeq protein sequence ID" value="NP_008936.2"/>
</dbReference>
<dbReference type="UCSC" id="uc004alc.5">
    <molecule id="Q04727-1"/>
    <property type="organism name" value="human"/>
</dbReference>
<dbReference type="AGR" id="HGNC:11840"/>
<dbReference type="CTD" id="7091"/>
<dbReference type="DisGeNET" id="7091"/>
<dbReference type="GeneCards" id="TLE4"/>
<dbReference type="HGNC" id="HGNC:11840">
    <property type="gene designation" value="TLE4"/>
</dbReference>
<dbReference type="HPA" id="ENSG00000106829">
    <property type="expression patterns" value="Tissue enhanced (testis)"/>
</dbReference>
<dbReference type="MIM" id="605132">
    <property type="type" value="gene"/>
</dbReference>
<dbReference type="neXtProt" id="NX_Q04727"/>
<dbReference type="OpenTargets" id="ENSG00000106829"/>
<dbReference type="PharmGKB" id="PA36542"/>
<dbReference type="VEuPathDB" id="HostDB:ENSG00000106829"/>
<dbReference type="eggNOG" id="KOG0639">
    <property type="taxonomic scope" value="Eukaryota"/>
</dbReference>
<dbReference type="GeneTree" id="ENSGT01030000234519"/>
<dbReference type="HOGENOM" id="CLU_007612_3_0_1"/>
<dbReference type="InParanoid" id="Q04727"/>
<dbReference type="OMA" id="HYLVPYN"/>
<dbReference type="OrthoDB" id="2624652at2759"/>
<dbReference type="PAN-GO" id="Q04727">
    <property type="GO annotations" value="4 GO annotations based on evolutionary models"/>
</dbReference>
<dbReference type="PhylomeDB" id="Q04727"/>
<dbReference type="TreeFam" id="TF314167"/>
<dbReference type="PathwayCommons" id="Q04727"/>
<dbReference type="Reactome" id="R-HSA-201722">
    <property type="pathway name" value="Formation of the beta-catenin:TCF transactivating complex"/>
</dbReference>
<dbReference type="Reactome" id="R-HSA-2122947">
    <property type="pathway name" value="NOTCH1 Intracellular Domain Regulates Transcription"/>
</dbReference>
<dbReference type="Reactome" id="R-HSA-3769402">
    <property type="pathway name" value="Deactivation of the beta-catenin transactivating complex"/>
</dbReference>
<dbReference type="Reactome" id="R-HSA-4641265">
    <property type="pathway name" value="Repression of WNT target genes"/>
</dbReference>
<dbReference type="SignaLink" id="Q04727"/>
<dbReference type="SIGNOR" id="Q04727"/>
<dbReference type="BioGRID-ORCS" id="7091">
    <property type="hits" value="18 hits in 1164 CRISPR screens"/>
</dbReference>
<dbReference type="ChiTaRS" id="TLE4">
    <property type="organism name" value="human"/>
</dbReference>
<dbReference type="GenomeRNAi" id="7091"/>
<dbReference type="Pharos" id="Q04727">
    <property type="development level" value="Tbio"/>
</dbReference>
<dbReference type="PRO" id="PR:Q04727"/>
<dbReference type="Proteomes" id="UP000005640">
    <property type="component" value="Chromosome 9"/>
</dbReference>
<dbReference type="RNAct" id="Q04727">
    <property type="molecule type" value="protein"/>
</dbReference>
<dbReference type="Bgee" id="ENSG00000106829">
    <property type="expression patterns" value="Expressed in cranial nerve II and 203 other cell types or tissues"/>
</dbReference>
<dbReference type="ExpressionAtlas" id="Q04727">
    <property type="expression patterns" value="baseline and differential"/>
</dbReference>
<dbReference type="GO" id="GO:1990907">
    <property type="term" value="C:beta-catenin-TCF complex"/>
    <property type="evidence" value="ECO:0000314"/>
    <property type="project" value="FlyBase"/>
</dbReference>
<dbReference type="GO" id="GO:0005654">
    <property type="term" value="C:nucleoplasm"/>
    <property type="evidence" value="ECO:0000314"/>
    <property type="project" value="HPA"/>
</dbReference>
<dbReference type="GO" id="GO:0005634">
    <property type="term" value="C:nucleus"/>
    <property type="evidence" value="ECO:0007005"/>
    <property type="project" value="UniProtKB"/>
</dbReference>
<dbReference type="GO" id="GO:0005667">
    <property type="term" value="C:transcription regulator complex"/>
    <property type="evidence" value="ECO:0000318"/>
    <property type="project" value="GO_Central"/>
</dbReference>
<dbReference type="GO" id="GO:0003682">
    <property type="term" value="F:chromatin binding"/>
    <property type="evidence" value="ECO:0007669"/>
    <property type="project" value="Ensembl"/>
</dbReference>
<dbReference type="GO" id="GO:0140297">
    <property type="term" value="F:DNA-binding transcription factor binding"/>
    <property type="evidence" value="ECO:0007669"/>
    <property type="project" value="Ensembl"/>
</dbReference>
<dbReference type="GO" id="GO:0003714">
    <property type="term" value="F:transcription corepressor activity"/>
    <property type="evidence" value="ECO:0000318"/>
    <property type="project" value="GO_Central"/>
</dbReference>
<dbReference type="GO" id="GO:1990830">
    <property type="term" value="P:cellular response to leukemia inhibitory factor"/>
    <property type="evidence" value="ECO:0007669"/>
    <property type="project" value="Ensembl"/>
</dbReference>
<dbReference type="GO" id="GO:0090090">
    <property type="term" value="P:negative regulation of canonical Wnt signaling pathway"/>
    <property type="evidence" value="ECO:0000318"/>
    <property type="project" value="GO_Central"/>
</dbReference>
<dbReference type="GO" id="GO:0000122">
    <property type="term" value="P:negative regulation of transcription by RNA polymerase II"/>
    <property type="evidence" value="ECO:0000250"/>
    <property type="project" value="UniProtKB"/>
</dbReference>
<dbReference type="GO" id="GO:0016055">
    <property type="term" value="P:Wnt signaling pathway"/>
    <property type="evidence" value="ECO:0007669"/>
    <property type="project" value="UniProtKB-KW"/>
</dbReference>
<dbReference type="CDD" id="cd00200">
    <property type="entry name" value="WD40"/>
    <property type="match status" value="1"/>
</dbReference>
<dbReference type="FunFam" id="2.130.10.10:FF:000001">
    <property type="entry name" value="transducin-like enhancer protein 3 isoform X1"/>
    <property type="match status" value="1"/>
</dbReference>
<dbReference type="Gene3D" id="2.130.10.10">
    <property type="entry name" value="YVTN repeat-like/Quinoprotein amine dehydrogenase"/>
    <property type="match status" value="1"/>
</dbReference>
<dbReference type="InterPro" id="IPR005617">
    <property type="entry name" value="Groucho/TLE_N"/>
</dbReference>
<dbReference type="InterPro" id="IPR009146">
    <property type="entry name" value="Groucho_enhance"/>
</dbReference>
<dbReference type="InterPro" id="IPR015943">
    <property type="entry name" value="WD40/YVTN_repeat-like_dom_sf"/>
</dbReference>
<dbReference type="InterPro" id="IPR019775">
    <property type="entry name" value="WD40_repeat_CS"/>
</dbReference>
<dbReference type="InterPro" id="IPR036322">
    <property type="entry name" value="WD40_repeat_dom_sf"/>
</dbReference>
<dbReference type="InterPro" id="IPR001680">
    <property type="entry name" value="WD40_rpt"/>
</dbReference>
<dbReference type="PANTHER" id="PTHR10814">
    <property type="entry name" value="TRANSDUCIN-LIKE ENHANCER PROTEIN"/>
    <property type="match status" value="1"/>
</dbReference>
<dbReference type="PANTHER" id="PTHR10814:SF31">
    <property type="entry name" value="TRANSDUCIN-LIKE ENHANCER PROTEIN 4"/>
    <property type="match status" value="1"/>
</dbReference>
<dbReference type="Pfam" id="PF03920">
    <property type="entry name" value="TLE_N"/>
    <property type="match status" value="1"/>
</dbReference>
<dbReference type="Pfam" id="PF00400">
    <property type="entry name" value="WD40"/>
    <property type="match status" value="6"/>
</dbReference>
<dbReference type="PRINTS" id="PR01850">
    <property type="entry name" value="GROUCHOFAMLY"/>
</dbReference>
<dbReference type="SMART" id="SM00320">
    <property type="entry name" value="WD40"/>
    <property type="match status" value="7"/>
</dbReference>
<dbReference type="SUPFAM" id="SSF50978">
    <property type="entry name" value="WD40 repeat-like"/>
    <property type="match status" value="1"/>
</dbReference>
<dbReference type="PROSITE" id="PS00678">
    <property type="entry name" value="WD_REPEATS_1"/>
    <property type="match status" value="2"/>
</dbReference>
<dbReference type="PROSITE" id="PS50082">
    <property type="entry name" value="WD_REPEATS_2"/>
    <property type="match status" value="3"/>
</dbReference>
<dbReference type="PROSITE" id="PS50294">
    <property type="entry name" value="WD_REPEATS_REGION"/>
    <property type="match status" value="2"/>
</dbReference>
<feature type="chain" id="PRO_0000051283" description="Transducin-like enhancer protein 4">
    <location>
        <begin position="1"/>
        <end position="773"/>
    </location>
</feature>
<feature type="repeat" description="WD 1">
    <location>
        <begin position="485"/>
        <end position="523"/>
    </location>
</feature>
<feature type="repeat" description="WD 2">
    <location>
        <begin position="531"/>
        <end position="570"/>
    </location>
</feature>
<feature type="repeat" description="WD 3">
    <location>
        <begin position="575"/>
        <end position="614"/>
    </location>
</feature>
<feature type="repeat" description="WD 4">
    <location>
        <begin position="617"/>
        <end position="656"/>
    </location>
</feature>
<feature type="repeat" description="WD 5">
    <location>
        <begin position="658"/>
        <end position="697"/>
    </location>
</feature>
<feature type="repeat" description="WD 6">
    <location>
        <begin position="699"/>
        <end position="738"/>
    </location>
</feature>
<feature type="repeat" description="WD 7">
    <location>
        <begin position="740"/>
        <end position="773"/>
    </location>
</feature>
<feature type="region of interest" description="Q domain" evidence="12">
    <location>
        <begin position="1"/>
        <end position="136"/>
    </location>
</feature>
<feature type="region of interest" description="Disordered" evidence="5">
    <location>
        <begin position="1"/>
        <end position="22"/>
    </location>
</feature>
<feature type="region of interest" description="GP domain" evidence="12">
    <location>
        <begin position="137"/>
        <end position="204"/>
    </location>
</feature>
<feature type="region of interest" description="Disordered" evidence="5">
    <location>
        <begin position="140"/>
        <end position="162"/>
    </location>
</feature>
<feature type="region of interest" description="Disordered" evidence="5">
    <location>
        <begin position="182"/>
        <end position="360"/>
    </location>
</feature>
<feature type="region of interest" description="CcN domain" evidence="12">
    <location>
        <begin position="205"/>
        <end position="274"/>
    </location>
</feature>
<feature type="region of interest" description="SP domain" evidence="12">
    <location>
        <begin position="275"/>
        <end position="452"/>
    </location>
</feature>
<feature type="compositionally biased region" description="Basic and acidic residues" evidence="5">
    <location>
        <begin position="183"/>
        <end position="202"/>
    </location>
</feature>
<feature type="compositionally biased region" description="Low complexity" evidence="5">
    <location>
        <begin position="203"/>
        <end position="212"/>
    </location>
</feature>
<feature type="compositionally biased region" description="Basic and acidic residues" evidence="5">
    <location>
        <begin position="215"/>
        <end position="252"/>
    </location>
</feature>
<feature type="compositionally biased region" description="Basic and acidic residues" evidence="5">
    <location>
        <begin position="273"/>
        <end position="289"/>
    </location>
</feature>
<feature type="compositionally biased region" description="Low complexity" evidence="5">
    <location>
        <begin position="290"/>
        <end position="305"/>
    </location>
</feature>
<feature type="compositionally biased region" description="Polar residues" evidence="5">
    <location>
        <begin position="317"/>
        <end position="328"/>
    </location>
</feature>
<feature type="modified residue" description="Phosphoserine" evidence="17 18">
    <location>
        <position position="208"/>
    </location>
</feature>
<feature type="modified residue" description="Phosphoserine" evidence="3">
    <location>
        <position position="212"/>
    </location>
</feature>
<feature type="modified residue" description="Phosphoserine" evidence="3">
    <location>
        <position position="222"/>
    </location>
</feature>
<feature type="modified residue" description="N6-acetyllysine" evidence="14">
    <location>
        <position position="237"/>
    </location>
</feature>
<feature type="modified residue" description="Phosphoserine" evidence="2">
    <location>
        <position position="245"/>
    </location>
</feature>
<feature type="modified residue" description="Phosphoserine" evidence="13">
    <location>
        <position position="250"/>
    </location>
</feature>
<feature type="modified residue" description="Phosphoserine" evidence="13">
    <location>
        <position position="269"/>
    </location>
</feature>
<feature type="modified residue" description="Phosphoserine" evidence="3">
    <location>
        <position position="273"/>
    </location>
</feature>
<feature type="modified residue" description="N6-acetyllysine" evidence="14">
    <location>
        <position position="281"/>
    </location>
</feature>
<feature type="modified residue" description="Phosphoserine" evidence="15 16 17">
    <location>
        <position position="292"/>
    </location>
</feature>
<feature type="modified residue" description="Phosphothreonine" evidence="4">
    <location>
        <position position="318"/>
    </location>
</feature>
<feature type="modified residue" description="Phosphoserine" evidence="4">
    <location>
        <position position="321"/>
    </location>
</feature>
<feature type="modified residue" description="Phosphoserine" evidence="3">
    <location>
        <position position="323"/>
    </location>
</feature>
<feature type="modified residue" description="Phosphothreonine" evidence="4">
    <location>
        <position position="325"/>
    </location>
</feature>
<feature type="modified residue" description="Phosphothreonine" evidence="3">
    <location>
        <position position="327"/>
    </location>
</feature>
<feature type="modified residue" description="Phosphothreonine" evidence="3">
    <location>
        <position position="334"/>
    </location>
</feature>
<feature type="modified residue" description="Phosphothreonine" evidence="3">
    <location>
        <position position="340"/>
    </location>
</feature>
<feature type="modified residue" description="Phosphoserine" evidence="3">
    <location>
        <position position="419"/>
    </location>
</feature>
<feature type="splice variant" id="VSP_055169" description="In isoform 4." evidence="8">
    <location>
        <begin position="106"/>
        <end position="130"/>
    </location>
</feature>
<feature type="splice variant" id="VSP_030497" description="In isoform 2." evidence="9">
    <location>
        <begin position="244"/>
        <end position="312"/>
    </location>
</feature>
<feature type="splice variant" id="VSP_030498" description="In isoform 3." evidence="9">
    <original>L</original>
    <variation>LKRDMGKLSETRLSEDEQCTLGLQRWFCRLWFM</variation>
    <location>
        <position position="312"/>
    </location>
</feature>
<feature type="sequence conflict" description="In Ref. 5; CAB82397." evidence="10" ref="5">
    <original>Q</original>
    <variation>QQ</variation>
    <location>
        <position position="131"/>
    </location>
</feature>
<feature type="sequence conflict" description="In Ref. 6; AAA61195." evidence="10" ref="6">
    <original>A</original>
    <variation>P</variation>
    <location>
        <position position="468"/>
    </location>
</feature>
<feature type="sequence conflict" description="In Ref. 6; AAA61195." evidence="10" ref="6">
    <original>C</original>
    <variation>A</variation>
    <location>
        <position position="509"/>
    </location>
</feature>
<evidence type="ECO:0000250" key="1"/>
<evidence type="ECO:0000250" key="2">
    <source>
        <dbReference type="UniProtKB" id="Q04724"/>
    </source>
</evidence>
<evidence type="ECO:0000250" key="3">
    <source>
        <dbReference type="UniProtKB" id="Q04726"/>
    </source>
</evidence>
<evidence type="ECO:0000250" key="4">
    <source>
        <dbReference type="UniProtKB" id="Q62441"/>
    </source>
</evidence>
<evidence type="ECO:0000256" key="5">
    <source>
        <dbReference type="SAM" id="MobiDB-lite"/>
    </source>
</evidence>
<evidence type="ECO:0000269" key="6">
    <source>
    </source>
</evidence>
<evidence type="ECO:0000269" key="7">
    <source>
    </source>
</evidence>
<evidence type="ECO:0000303" key="8">
    <source>
    </source>
</evidence>
<evidence type="ECO:0000303" key="9">
    <source>
    </source>
</evidence>
<evidence type="ECO:0000305" key="10"/>
<evidence type="ECO:0000305" key="11">
    <source>
    </source>
</evidence>
<evidence type="ECO:0000305" key="12">
    <source>
    </source>
</evidence>
<evidence type="ECO:0007744" key="13">
    <source>
    </source>
</evidence>
<evidence type="ECO:0007744" key="14">
    <source>
    </source>
</evidence>
<evidence type="ECO:0007744" key="15">
    <source>
    </source>
</evidence>
<evidence type="ECO:0007744" key="16">
    <source>
    </source>
</evidence>
<evidence type="ECO:0007744" key="17">
    <source>
    </source>
</evidence>
<evidence type="ECO:0007744" key="18">
    <source>
    </source>
</evidence>
<sequence length="773" mass="83755">MIRDLSKMYPQTRHPAPHQPAQPFKFTISESCDRIKEEFQFLQAQYHSLKLECEKLASEKTEMQRHYVMYYEMSYGLNIEMHKQAEIVKRLNAICAQVIPFLSQEHQQQVVQAVERAKQVTMAELNAIIGQQLQAQHLSHGHGLPVPLTPHPSGLQPPAIPPIGSSAGLLALSSALGGQSHLPIKDEKKHHDNDHQRDRDSIKSSSVSPSASFRGAEKHRNSADYSSESKKQKTEEKEIAARYDSDGEKSDDNLVVDVSNEDPSSPRGSPAHSPRENGLDKTRLLKKDAPISPASIASSSSTPSSKSKELSLNEKSTTPVSKSNTPTPRTDAPTPGSNSTPGLRPVPGKPPGVDPLASSLRTPMAVPCPYPTPFGIVPHAGMNGELTSPGAAYAGLHNISPQMSAAAAAAAAAAAYGRSPVVGFDPHHHMRVPAIPPNLTGIPGGKPAYSFHVSADGQMQPVPFPPDALIGPGIPRHARQINTLNHGEVVCAVTISNPTRHVYTGGKGCVKVWDISHPGNKSPVSQLDCLNRDNYIRSCRLLPDGRTLIVGGEASTLSIWDLAAPTPRIKAELTSSAPACYALAISPDSKVCFSCCSDGNIAVWDLHNQTLVRQFQGHTDGASCIDISNDGTKLWTGGLDNTVRSWDLREGRQLQQHDFTSQIFSLGYCPTGEWLAVGMENSNVEVLHVTKPDKYQLHLHESCVLSLKFAHCGKWFVSTGKDNLLNAWRTPYGASIFQSKESSSVLSCDISVDDKYIVTGSGDKKATVYEVIY</sequence>
<gene>
    <name type="primary">TLE4</name>
    <name type="synonym">GRG4</name>
    <name type="synonym">KIAA1261</name>
</gene>
<reference key="1">
    <citation type="journal article" date="1999" name="DNA Res.">
        <title>Prediction of the coding sequences of unidentified human genes. XV. The complete sequences of 100 new cDNA clones from brain which code for large proteins in vitro.</title>
        <authorList>
            <person name="Nagase T."/>
            <person name="Ishikawa K."/>
            <person name="Kikuno R."/>
            <person name="Hirosawa M."/>
            <person name="Nomura N."/>
            <person name="Ohara O."/>
        </authorList>
    </citation>
    <scope>NUCLEOTIDE SEQUENCE [LARGE SCALE MRNA] (ISOFORM 1)</scope>
    <source>
        <tissue>Brain</tissue>
    </source>
</reference>
<reference key="2">
    <citation type="journal article" date="2004" name="Nat. Genet.">
        <title>Complete sequencing and characterization of 21,243 full-length human cDNAs.</title>
        <authorList>
            <person name="Ota T."/>
            <person name="Suzuki Y."/>
            <person name="Nishikawa T."/>
            <person name="Otsuki T."/>
            <person name="Sugiyama T."/>
            <person name="Irie R."/>
            <person name="Wakamatsu A."/>
            <person name="Hayashi K."/>
            <person name="Sato H."/>
            <person name="Nagai K."/>
            <person name="Kimura K."/>
            <person name="Makita H."/>
            <person name="Sekine M."/>
            <person name="Obayashi M."/>
            <person name="Nishi T."/>
            <person name="Shibahara T."/>
            <person name="Tanaka T."/>
            <person name="Ishii S."/>
            <person name="Yamamoto J."/>
            <person name="Saito K."/>
            <person name="Kawai Y."/>
            <person name="Isono Y."/>
            <person name="Nakamura Y."/>
            <person name="Nagahari K."/>
            <person name="Murakami K."/>
            <person name="Yasuda T."/>
            <person name="Iwayanagi T."/>
            <person name="Wagatsuma M."/>
            <person name="Shiratori A."/>
            <person name="Sudo H."/>
            <person name="Hosoiri T."/>
            <person name="Kaku Y."/>
            <person name="Kodaira H."/>
            <person name="Kondo H."/>
            <person name="Sugawara M."/>
            <person name="Takahashi M."/>
            <person name="Kanda K."/>
            <person name="Yokoi T."/>
            <person name="Furuya T."/>
            <person name="Kikkawa E."/>
            <person name="Omura Y."/>
            <person name="Abe K."/>
            <person name="Kamihara K."/>
            <person name="Katsuta N."/>
            <person name="Sato K."/>
            <person name="Tanikawa M."/>
            <person name="Yamazaki M."/>
            <person name="Ninomiya K."/>
            <person name="Ishibashi T."/>
            <person name="Yamashita H."/>
            <person name="Murakawa K."/>
            <person name="Fujimori K."/>
            <person name="Tanai H."/>
            <person name="Kimata M."/>
            <person name="Watanabe M."/>
            <person name="Hiraoka S."/>
            <person name="Chiba Y."/>
            <person name="Ishida S."/>
            <person name="Ono Y."/>
            <person name="Takiguchi S."/>
            <person name="Watanabe S."/>
            <person name="Yosida M."/>
            <person name="Hotuta T."/>
            <person name="Kusano J."/>
            <person name="Kanehori K."/>
            <person name="Takahashi-Fujii A."/>
            <person name="Hara H."/>
            <person name="Tanase T.-O."/>
            <person name="Nomura Y."/>
            <person name="Togiya S."/>
            <person name="Komai F."/>
            <person name="Hara R."/>
            <person name="Takeuchi K."/>
            <person name="Arita M."/>
            <person name="Imose N."/>
            <person name="Musashino K."/>
            <person name="Yuuki H."/>
            <person name="Oshima A."/>
            <person name="Sasaki N."/>
            <person name="Aotsuka S."/>
            <person name="Yoshikawa Y."/>
            <person name="Matsunawa H."/>
            <person name="Ichihara T."/>
            <person name="Shiohata N."/>
            <person name="Sano S."/>
            <person name="Moriya S."/>
            <person name="Momiyama H."/>
            <person name="Satoh N."/>
            <person name="Takami S."/>
            <person name="Terashima Y."/>
            <person name="Suzuki O."/>
            <person name="Nakagawa S."/>
            <person name="Senoh A."/>
            <person name="Mizoguchi H."/>
            <person name="Goto Y."/>
            <person name="Shimizu F."/>
            <person name="Wakebe H."/>
            <person name="Hishigaki H."/>
            <person name="Watanabe T."/>
            <person name="Sugiyama A."/>
            <person name="Takemoto M."/>
            <person name="Kawakami B."/>
            <person name="Yamazaki M."/>
            <person name="Watanabe K."/>
            <person name="Kumagai A."/>
            <person name="Itakura S."/>
            <person name="Fukuzumi Y."/>
            <person name="Fujimori Y."/>
            <person name="Komiyama M."/>
            <person name="Tashiro H."/>
            <person name="Tanigami A."/>
            <person name="Fujiwara T."/>
            <person name="Ono T."/>
            <person name="Yamada K."/>
            <person name="Fujii Y."/>
            <person name="Ozaki K."/>
            <person name="Hirao M."/>
            <person name="Ohmori Y."/>
            <person name="Kawabata A."/>
            <person name="Hikiji T."/>
            <person name="Kobatake N."/>
            <person name="Inagaki H."/>
            <person name="Ikema Y."/>
            <person name="Okamoto S."/>
            <person name="Okitani R."/>
            <person name="Kawakami T."/>
            <person name="Noguchi S."/>
            <person name="Itoh T."/>
            <person name="Shigeta K."/>
            <person name="Senba T."/>
            <person name="Matsumura K."/>
            <person name="Nakajima Y."/>
            <person name="Mizuno T."/>
            <person name="Morinaga M."/>
            <person name="Sasaki M."/>
            <person name="Togashi T."/>
            <person name="Oyama M."/>
            <person name="Hata H."/>
            <person name="Watanabe M."/>
            <person name="Komatsu T."/>
            <person name="Mizushima-Sugano J."/>
            <person name="Satoh T."/>
            <person name="Shirai Y."/>
            <person name="Takahashi Y."/>
            <person name="Nakagawa K."/>
            <person name="Okumura K."/>
            <person name="Nagase T."/>
            <person name="Nomura N."/>
            <person name="Kikuchi H."/>
            <person name="Masuho Y."/>
            <person name="Yamashita R."/>
            <person name="Nakai K."/>
            <person name="Yada T."/>
            <person name="Nakamura Y."/>
            <person name="Ohara O."/>
            <person name="Isogai T."/>
            <person name="Sugano S."/>
        </authorList>
    </citation>
    <scope>NUCLEOTIDE SEQUENCE [LARGE SCALE MRNA] (ISOFORM 4)</scope>
    <source>
        <tissue>Thalamus</tissue>
    </source>
</reference>
<reference key="3">
    <citation type="journal article" date="2004" name="Nature">
        <title>DNA sequence and analysis of human chromosome 9.</title>
        <authorList>
            <person name="Humphray S.J."/>
            <person name="Oliver K."/>
            <person name="Hunt A.R."/>
            <person name="Plumb R.W."/>
            <person name="Loveland J.E."/>
            <person name="Howe K.L."/>
            <person name="Andrews T.D."/>
            <person name="Searle S."/>
            <person name="Hunt S.E."/>
            <person name="Scott C.E."/>
            <person name="Jones M.C."/>
            <person name="Ainscough R."/>
            <person name="Almeida J.P."/>
            <person name="Ambrose K.D."/>
            <person name="Ashwell R.I.S."/>
            <person name="Babbage A.K."/>
            <person name="Babbage S."/>
            <person name="Bagguley C.L."/>
            <person name="Bailey J."/>
            <person name="Banerjee R."/>
            <person name="Barker D.J."/>
            <person name="Barlow K.F."/>
            <person name="Bates K."/>
            <person name="Beasley H."/>
            <person name="Beasley O."/>
            <person name="Bird C.P."/>
            <person name="Bray-Allen S."/>
            <person name="Brown A.J."/>
            <person name="Brown J.Y."/>
            <person name="Burford D."/>
            <person name="Burrill W."/>
            <person name="Burton J."/>
            <person name="Carder C."/>
            <person name="Carter N.P."/>
            <person name="Chapman J.C."/>
            <person name="Chen Y."/>
            <person name="Clarke G."/>
            <person name="Clark S.Y."/>
            <person name="Clee C.M."/>
            <person name="Clegg S."/>
            <person name="Collier R.E."/>
            <person name="Corby N."/>
            <person name="Crosier M."/>
            <person name="Cummings A.T."/>
            <person name="Davies J."/>
            <person name="Dhami P."/>
            <person name="Dunn M."/>
            <person name="Dutta I."/>
            <person name="Dyer L.W."/>
            <person name="Earthrowl M.E."/>
            <person name="Faulkner L."/>
            <person name="Fleming C.J."/>
            <person name="Frankish A."/>
            <person name="Frankland J.A."/>
            <person name="French L."/>
            <person name="Fricker D.G."/>
            <person name="Garner P."/>
            <person name="Garnett J."/>
            <person name="Ghori J."/>
            <person name="Gilbert J.G.R."/>
            <person name="Glison C."/>
            <person name="Grafham D.V."/>
            <person name="Gribble S."/>
            <person name="Griffiths C."/>
            <person name="Griffiths-Jones S."/>
            <person name="Grocock R."/>
            <person name="Guy J."/>
            <person name="Hall R.E."/>
            <person name="Hammond S."/>
            <person name="Harley J.L."/>
            <person name="Harrison E.S.I."/>
            <person name="Hart E.A."/>
            <person name="Heath P.D."/>
            <person name="Henderson C.D."/>
            <person name="Hopkins B.L."/>
            <person name="Howard P.J."/>
            <person name="Howden P.J."/>
            <person name="Huckle E."/>
            <person name="Johnson C."/>
            <person name="Johnson D."/>
            <person name="Joy A.A."/>
            <person name="Kay M."/>
            <person name="Keenan S."/>
            <person name="Kershaw J.K."/>
            <person name="Kimberley A.M."/>
            <person name="King A."/>
            <person name="Knights A."/>
            <person name="Laird G.K."/>
            <person name="Langford C."/>
            <person name="Lawlor S."/>
            <person name="Leongamornlert D.A."/>
            <person name="Leversha M."/>
            <person name="Lloyd C."/>
            <person name="Lloyd D.M."/>
            <person name="Lovell J."/>
            <person name="Martin S."/>
            <person name="Mashreghi-Mohammadi M."/>
            <person name="Matthews L."/>
            <person name="McLaren S."/>
            <person name="McLay K.E."/>
            <person name="McMurray A."/>
            <person name="Milne S."/>
            <person name="Nickerson T."/>
            <person name="Nisbett J."/>
            <person name="Nordsiek G."/>
            <person name="Pearce A.V."/>
            <person name="Peck A.I."/>
            <person name="Porter K.M."/>
            <person name="Pandian R."/>
            <person name="Pelan S."/>
            <person name="Phillimore B."/>
            <person name="Povey S."/>
            <person name="Ramsey Y."/>
            <person name="Rand V."/>
            <person name="Scharfe M."/>
            <person name="Sehra H.K."/>
            <person name="Shownkeen R."/>
            <person name="Sims S.K."/>
            <person name="Skuce C.D."/>
            <person name="Smith M."/>
            <person name="Steward C.A."/>
            <person name="Swarbreck D."/>
            <person name="Sycamore N."/>
            <person name="Tester J."/>
            <person name="Thorpe A."/>
            <person name="Tracey A."/>
            <person name="Tromans A."/>
            <person name="Thomas D.W."/>
            <person name="Wall M."/>
            <person name="Wallis J.M."/>
            <person name="West A.P."/>
            <person name="Whitehead S.L."/>
            <person name="Willey D.L."/>
            <person name="Williams S.A."/>
            <person name="Wilming L."/>
            <person name="Wray P.W."/>
            <person name="Young L."/>
            <person name="Ashurst J.L."/>
            <person name="Coulson A."/>
            <person name="Blocker H."/>
            <person name="Durbin R.M."/>
            <person name="Sulston J.E."/>
            <person name="Hubbard T."/>
            <person name="Jackson M.J."/>
            <person name="Bentley D.R."/>
            <person name="Beck S."/>
            <person name="Rogers J."/>
            <person name="Dunham I."/>
        </authorList>
    </citation>
    <scope>NUCLEOTIDE SEQUENCE [LARGE SCALE GENOMIC DNA]</scope>
</reference>
<reference key="4">
    <citation type="journal article" date="2004" name="Genome Res.">
        <title>The status, quality, and expansion of the NIH full-length cDNA project: the Mammalian Gene Collection (MGC).</title>
        <authorList>
            <consortium name="The MGC Project Team"/>
        </authorList>
    </citation>
    <scope>NUCLEOTIDE SEQUENCE [LARGE SCALE MRNA] (ISOFORMS 2 AND 3)</scope>
    <source>
        <tissue>Testis</tissue>
    </source>
</reference>
<reference key="5">
    <citation type="journal article" date="2007" name="BMC Genomics">
        <title>The full-ORF clone resource of the German cDNA consortium.</title>
        <authorList>
            <person name="Bechtel S."/>
            <person name="Rosenfelder H."/>
            <person name="Duda A."/>
            <person name="Schmidt C.P."/>
            <person name="Ernst U."/>
            <person name="Wellenreuther R."/>
            <person name="Mehrle A."/>
            <person name="Schuster C."/>
            <person name="Bahr A."/>
            <person name="Bloecker H."/>
            <person name="Heubner D."/>
            <person name="Hoerlein A."/>
            <person name="Michel G."/>
            <person name="Wedler H."/>
            <person name="Koehrer K."/>
            <person name="Ottenwaelder B."/>
            <person name="Poustka A."/>
            <person name="Wiemann S."/>
            <person name="Schupp I."/>
        </authorList>
    </citation>
    <scope>NUCLEOTIDE SEQUENCE [LARGE SCALE MRNA] OF 51-773 (ISOFORM 1)</scope>
    <source>
        <tissue>Brain</tissue>
    </source>
</reference>
<reference key="6">
    <citation type="journal article" date="1992" name="Nat. Genet.">
        <title>Human homologs of a Drosophila enhancer of split gene product define a novel family of nuclear proteins.</title>
        <authorList>
            <person name="Stifani S."/>
            <person name="Blaumueller C.M."/>
            <person name="Redhead N.J."/>
            <person name="Hill R.E."/>
            <person name="Artavanis-Tsakonas S."/>
        </authorList>
    </citation>
    <scope>NUCLEOTIDE SEQUENCE [MRNA] OF 326-773</scope>
    <source>
        <tissue>Fetal brain</tissue>
    </source>
</reference>
<reference key="7">
    <citation type="journal article" date="2006" name="Cell">
        <title>Global, in vivo, and site-specific phosphorylation dynamics in signaling networks.</title>
        <authorList>
            <person name="Olsen J.V."/>
            <person name="Blagoev B."/>
            <person name="Gnad F."/>
            <person name="Macek B."/>
            <person name="Kumar C."/>
            <person name="Mortensen P."/>
            <person name="Mann M."/>
        </authorList>
    </citation>
    <scope>PHOSPHORYLATION [LARGE SCALE ANALYSIS] AT SER-250 AND SER-269</scope>
    <scope>IDENTIFICATION BY MASS SPECTROMETRY [LARGE SCALE ANALYSIS]</scope>
    <source>
        <tissue>Cervix carcinoma</tissue>
    </source>
</reference>
<reference key="8">
    <citation type="journal article" date="2008" name="Genome Biol.">
        <title>The Groucho/TLE/Grg family of transcriptional co-repressors.</title>
        <authorList>
            <person name="Jennings B.H."/>
            <person name="Ish-Horowicz D."/>
        </authorList>
    </citation>
    <scope>REVIEW</scope>
</reference>
<reference key="9">
    <citation type="journal article" date="2008" name="Proc. Natl. Acad. Sci. U.S.A.">
        <title>A quantitative atlas of mitotic phosphorylation.</title>
        <authorList>
            <person name="Dephoure N."/>
            <person name="Zhou C."/>
            <person name="Villen J."/>
            <person name="Beausoleil S.A."/>
            <person name="Bakalarski C.E."/>
            <person name="Elledge S.J."/>
            <person name="Gygi S.P."/>
        </authorList>
    </citation>
    <scope>IDENTIFICATION BY MASS SPECTROMETRY [LARGE SCALE ANALYSIS]</scope>
    <source>
        <tissue>Cervix carcinoma</tissue>
    </source>
</reference>
<reference key="10">
    <citation type="journal article" date="2009" name="Anal. Chem.">
        <title>Lys-N and trypsin cover complementary parts of the phosphoproteome in a refined SCX-based approach.</title>
        <authorList>
            <person name="Gauci S."/>
            <person name="Helbig A.O."/>
            <person name="Slijper M."/>
            <person name="Krijgsveld J."/>
            <person name="Heck A.J."/>
            <person name="Mohammed S."/>
        </authorList>
    </citation>
    <scope>IDENTIFICATION BY MASS SPECTROMETRY [LARGE SCALE ANALYSIS]</scope>
</reference>
<reference key="11">
    <citation type="journal article" date="2009" name="Sci. Signal.">
        <title>Quantitative phosphoproteomic analysis of T cell receptor signaling reveals system-wide modulation of protein-protein interactions.</title>
        <authorList>
            <person name="Mayya V."/>
            <person name="Lundgren D.H."/>
            <person name="Hwang S.-I."/>
            <person name="Rezaul K."/>
            <person name="Wu L."/>
            <person name="Eng J.K."/>
            <person name="Rodionov V."/>
            <person name="Han D.K."/>
        </authorList>
    </citation>
    <scope>PHOSPHORYLATION [LARGE SCALE ANALYSIS] AT SER-292</scope>
    <scope>IDENTIFICATION BY MASS SPECTROMETRY [LARGE SCALE ANALYSIS]</scope>
    <source>
        <tissue>Leukemic T-cell</tissue>
    </source>
</reference>
<reference key="12">
    <citation type="journal article" date="2009" name="Science">
        <title>Lysine acetylation targets protein complexes and co-regulates major cellular functions.</title>
        <authorList>
            <person name="Choudhary C."/>
            <person name="Kumar C."/>
            <person name="Gnad F."/>
            <person name="Nielsen M.L."/>
            <person name="Rehman M."/>
            <person name="Walther T.C."/>
            <person name="Olsen J.V."/>
            <person name="Mann M."/>
        </authorList>
    </citation>
    <scope>ACETYLATION [LARGE SCALE ANALYSIS] AT LYS-237 AND LYS-281</scope>
    <scope>IDENTIFICATION BY MASS SPECTROMETRY [LARGE SCALE ANALYSIS]</scope>
</reference>
<reference key="13">
    <citation type="journal article" date="2011" name="BMB Rep.">
        <title>EphrinB1 interacts with the transcriptional co-repressor Groucho/xTLE4.</title>
        <authorList>
            <person name="Kamata T."/>
            <person name="Bong Y.S."/>
            <person name="Mood K."/>
            <person name="Park M.J."/>
            <person name="Nishanian T.G."/>
            <person name="Lee H.S."/>
        </authorList>
    </citation>
    <scope>Q; GP; CCN AND SP DOMAIN BOUNDARIES</scope>
</reference>
<reference key="14">
    <citation type="journal article" date="2011" name="Sci. Signal.">
        <title>System-wide temporal characterization of the proteome and phosphoproteome of human embryonic stem cell differentiation.</title>
        <authorList>
            <person name="Rigbolt K.T."/>
            <person name="Prokhorova T.A."/>
            <person name="Akimov V."/>
            <person name="Henningsen J."/>
            <person name="Johansen P.T."/>
            <person name="Kratchmarova I."/>
            <person name="Kassem M."/>
            <person name="Mann M."/>
            <person name="Olsen J.V."/>
            <person name="Blagoev B."/>
        </authorList>
    </citation>
    <scope>PHOSPHORYLATION [LARGE SCALE ANALYSIS] AT SER-292</scope>
    <scope>IDENTIFICATION BY MASS SPECTROMETRY [LARGE SCALE ANALYSIS]</scope>
</reference>
<reference key="15">
    <citation type="journal article" date="2012" name="Mol. Cell">
        <title>XIAP monoubiquitylates Groucho/TLE to promote canonical Wnt signaling.</title>
        <authorList>
            <person name="Hanson A.J."/>
            <person name="Wallace H.A."/>
            <person name="Freeman T.J."/>
            <person name="Beauchamp R.D."/>
            <person name="Lee L.A."/>
            <person name="Lee E."/>
        </authorList>
    </citation>
    <scope>UBIQUITINATION BY XIAP/BIRC4</scope>
</reference>
<reference key="16">
    <citation type="journal article" date="2013" name="J. Proteome Res.">
        <title>Toward a comprehensive characterization of a human cancer cell phosphoproteome.</title>
        <authorList>
            <person name="Zhou H."/>
            <person name="Di Palma S."/>
            <person name="Preisinger C."/>
            <person name="Peng M."/>
            <person name="Polat A.N."/>
            <person name="Heck A.J."/>
            <person name="Mohammed S."/>
        </authorList>
    </citation>
    <scope>PHOSPHORYLATION [LARGE SCALE ANALYSIS] AT SER-208 AND SER-292</scope>
    <scope>IDENTIFICATION BY MASS SPECTROMETRY [LARGE SCALE ANALYSIS]</scope>
    <source>
        <tissue>Cervix carcinoma</tissue>
        <tissue>Erythroleukemia</tissue>
    </source>
</reference>
<reference key="17">
    <citation type="journal article" date="2014" name="J. Am. Soc. Nephrol.">
        <title>Mutations in PAX2 associate with adult-onset FSGS.</title>
        <authorList>
            <person name="Barua M."/>
            <person name="Stellacci E."/>
            <person name="Stella L."/>
            <person name="Weins A."/>
            <person name="Genovese G."/>
            <person name="Muto V."/>
            <person name="Caputo V."/>
            <person name="Toka H.R."/>
            <person name="Charoonratana V.T."/>
            <person name="Tartaglia M."/>
            <person name="Pollak M.R."/>
        </authorList>
    </citation>
    <scope>INTERACTION WITH PAX2</scope>
</reference>
<reference key="18">
    <citation type="journal article" date="2014" name="J. Proteomics">
        <title>An enzyme assisted RP-RPLC approach for in-depth analysis of human liver phosphoproteome.</title>
        <authorList>
            <person name="Bian Y."/>
            <person name="Song C."/>
            <person name="Cheng K."/>
            <person name="Dong M."/>
            <person name="Wang F."/>
            <person name="Huang J."/>
            <person name="Sun D."/>
            <person name="Wang L."/>
            <person name="Ye M."/>
            <person name="Zou H."/>
        </authorList>
    </citation>
    <scope>PHOSPHORYLATION [LARGE SCALE ANALYSIS] AT SER-208</scope>
    <scope>IDENTIFICATION BY MASS SPECTROMETRY [LARGE SCALE ANALYSIS]</scope>
    <source>
        <tissue>Liver</tissue>
    </source>
</reference>
<organism>
    <name type="scientific">Homo sapiens</name>
    <name type="common">Human</name>
    <dbReference type="NCBI Taxonomy" id="9606"/>
    <lineage>
        <taxon>Eukaryota</taxon>
        <taxon>Metazoa</taxon>
        <taxon>Chordata</taxon>
        <taxon>Craniata</taxon>
        <taxon>Vertebrata</taxon>
        <taxon>Euteleostomi</taxon>
        <taxon>Mammalia</taxon>
        <taxon>Eutheria</taxon>
        <taxon>Euarchontoglires</taxon>
        <taxon>Primates</taxon>
        <taxon>Haplorrhini</taxon>
        <taxon>Catarrhini</taxon>
        <taxon>Hominidae</taxon>
        <taxon>Homo</taxon>
    </lineage>
</organism>
<comment type="function">
    <text evidence="1 4">Transcriptional corepressor that binds to a number of transcription factors. Inhibits the transcriptional activation mediated by PAX5, and by CTNNB1 and TCF family members in Wnt signaling. The effects of full-length TLE family members may be modulated by association with dominant-negative AES. Essential for the transcriptional repressor activity of SIX3 during retina and lens development and for SIX3 transcriptional auto-repression (By similarity). Involved in transcriptional repression of GNRHR and enhances MSX1-mediated transcriptional repression of CGA/alpha-GSU (By similarity).</text>
</comment>
<comment type="subunit">
    <text evidence="4 7">Homooligomer and heterooligomer with other family members. Interacts with PAX5 (By similarity). Interacts with LEF1, TCF7, TCF7L1 and TCF7L2 (By similarity). Interacts with ZNF703; TLE4 may mediate ZNF703 transcriptional repression (By similarity). Interacts with SIX3 and SIX6 (By similarity). Interacts with PAX2 (PubMed:24676634). Interacts with TLE1 (By similarity).</text>
</comment>
<comment type="interaction">
    <interactant intactId="EBI-12117860">
        <id>Q04727-2</id>
    </interactant>
    <interactant intactId="EBI-347978">
        <id>P37198</id>
        <label>NUP62</label>
    </interactant>
    <organismsDiffer>false</organismsDiffer>
    <experiments>3</experiments>
</comment>
<comment type="subcellular location">
    <subcellularLocation>
        <location>Nucleus</location>
    </subcellularLocation>
</comment>
<comment type="alternative products">
    <event type="alternative splicing"/>
    <isoform>
        <id>Q04727-1</id>
        <name>1</name>
        <sequence type="displayed"/>
    </isoform>
    <isoform>
        <id>Q04727-2</id>
        <name>2</name>
        <sequence type="described" ref="VSP_030497"/>
    </isoform>
    <isoform>
        <id>Q04727-3</id>
        <name>3</name>
        <sequence type="described" ref="VSP_030498"/>
    </isoform>
    <isoform>
        <id>Q04727-4</id>
        <name>4</name>
        <sequence type="described" ref="VSP_055169"/>
    </isoform>
</comment>
<comment type="tissue specificity">
    <text>In all tissues examined, mostly in brain, and muscle.</text>
</comment>
<comment type="domain">
    <text evidence="11">WD repeat Groucho/TLE family members are characterized by 5 regions, a glutamine-rich Q domain, a glycine/proline-rich GP domain, a central CcN domain, containing a nuclear localization signal, and a serine/proline-rich SP domain. The most highly conserved are the N-terminal Q domain and the C-terminal WD-repeat domain.</text>
</comment>
<comment type="PTM">
    <text evidence="4">Phosphorylated. PAX5 binding increases phosphorylation.</text>
</comment>
<comment type="PTM">
    <text evidence="6">Ubiquitinated by XIAP/BIRC4.</text>
</comment>
<comment type="similarity">
    <text evidence="10">Belongs to the WD repeat Groucho/TLE family.</text>
</comment>
<comment type="caution">
    <text evidence="10">It is uncertain whether Met-1 or Met-8 is the initiator.</text>
</comment>
<comment type="sequence caution" evidence="10">
    <conflict type="erroneous initiation">
        <sequence resource="EMBL-CDS" id="BAA86575"/>
    </conflict>
</comment>
<accession>Q04727</accession>
<accession>F8W6T6</accession>
<accession>Q3ZCS1</accession>
<accession>Q5T1Y2</accession>
<accession>Q6PCB3</accession>
<accession>Q9BZ07</accession>
<accession>Q9BZ08</accession>
<accession>Q9BZ09</accession>
<accession>Q9NSL3</accession>
<accession>Q9ULF9</accession>
<proteinExistence type="evidence at protein level"/>
<protein>
    <recommendedName>
        <fullName>Transducin-like enhancer protein 4</fullName>
    </recommendedName>
    <alternativeName>
        <fullName>Grg-4</fullName>
    </alternativeName>
    <alternativeName>
        <fullName>Groucho-related protein 4</fullName>
    </alternativeName>
</protein>
<name>TLE4_HUMAN</name>
<keyword id="KW-0007">Acetylation</keyword>
<keyword id="KW-0025">Alternative splicing</keyword>
<keyword id="KW-0539">Nucleus</keyword>
<keyword id="KW-0597">Phosphoprotein</keyword>
<keyword id="KW-1267">Proteomics identification</keyword>
<keyword id="KW-1185">Reference proteome</keyword>
<keyword id="KW-0677">Repeat</keyword>
<keyword id="KW-0678">Repressor</keyword>
<keyword id="KW-0804">Transcription</keyword>
<keyword id="KW-0805">Transcription regulation</keyword>
<keyword id="KW-0832">Ubl conjugation</keyword>
<keyword id="KW-0853">WD repeat</keyword>
<keyword id="KW-0879">Wnt signaling pathway</keyword>